<keyword id="KW-0106">Calcium</keyword>
<keyword id="KW-1015">Disulfide bond</keyword>
<keyword id="KW-0325">Glycoprotein</keyword>
<keyword id="KW-0349">Heme</keyword>
<keyword id="KW-0376">Hydrogen peroxide</keyword>
<keyword id="KW-0408">Iron</keyword>
<keyword id="KW-0479">Metal-binding</keyword>
<keyword id="KW-0560">Oxidoreductase</keyword>
<keyword id="KW-0575">Peroxidase</keyword>
<keyword id="KW-1185">Reference proteome</keyword>
<keyword id="KW-0964">Secreted</keyword>
<keyword id="KW-0732">Signal</keyword>
<comment type="function">
    <text>Removal of H(2)O(2), oxidation of toxic reductants, biosynthesis and degradation of lignin, suberization, auxin catabolism, response to environmental stresses such as wounding, pathogen attack and oxidative stress. These functions might be dependent on each isozyme/isoform in each plant tissue.</text>
</comment>
<comment type="catalytic activity">
    <reaction>
        <text>2 a phenolic donor + H2O2 = 2 a phenolic radical donor + 2 H2O</text>
        <dbReference type="Rhea" id="RHEA:56136"/>
        <dbReference type="ChEBI" id="CHEBI:15377"/>
        <dbReference type="ChEBI" id="CHEBI:16240"/>
        <dbReference type="ChEBI" id="CHEBI:139520"/>
        <dbReference type="ChEBI" id="CHEBI:139521"/>
        <dbReference type="EC" id="1.11.1.7"/>
    </reaction>
</comment>
<comment type="cofactor">
    <cofactor evidence="2">
        <name>heme b</name>
        <dbReference type="ChEBI" id="CHEBI:60344"/>
    </cofactor>
    <text evidence="2">Binds 1 heme b (iron(II)-protoporphyrin IX) group per subunit.</text>
</comment>
<comment type="cofactor">
    <cofactor evidence="2">
        <name>Ca(2+)</name>
        <dbReference type="ChEBI" id="CHEBI:29108"/>
    </cofactor>
    <text evidence="2">Binds 2 calcium ions per subunit.</text>
</comment>
<comment type="subcellular location">
    <subcellularLocation>
        <location evidence="2">Secreted</location>
    </subcellularLocation>
</comment>
<comment type="miscellaneous">
    <text>There are 73 peroxidase genes in A.thaliana.</text>
</comment>
<comment type="similarity">
    <text evidence="2">Belongs to the peroxidase family. Classical plant (class III) peroxidase subfamily.</text>
</comment>
<comment type="sequence caution" evidence="3">
    <conflict type="erroneous initiation">
        <sequence resource="EMBL-CDS" id="CAB39663"/>
    </conflict>
    <text>Extended N-terminus.</text>
</comment>
<comment type="sequence caution" evidence="3">
    <conflict type="erroneous initiation">
        <sequence resource="EMBL-CDS" id="CAB79453"/>
    </conflict>
    <text>Extended N-terminus.</text>
</comment>
<accession>Q9SZH2</accession>
<accession>F4JU42</accession>
<sequence>MVWANAKMRLALSLVTVFFGISLANLEVGFYSNTCPQAESIVKRVVSGAALSDPNLPAILLRLHFHDCFVEGCDGSILVNNGAISEKNAFGHEGVRGFEIVEAVKAELEAACPGVVSCSDIVALAARDAISLANGPAYEVPTGRRDGRVSNMSLAKDMPEVSDSIEILKAKFMQKGLNAKDLVLLSAAHTIGTTACFFMSKRLYDFLPGGQPDPTINPTFLPELTTQCPQNGDINVRLPIDRFSERLFDKQILQNIKDGFAVLQTDAGLYEDVTTRQVVDSYLGMLNPFFGPTFESDFVKAIVKMGKIGVKTGFKGEIRRVCSAFN</sequence>
<gene>
    <name type="primary">PER43</name>
    <name type="synonym">P43</name>
    <name type="ordered locus">At4g25980</name>
    <name type="ORF">F14M9.7</name>
    <name type="ORF">F20B18.90</name>
</gene>
<reference key="1">
    <citation type="journal article" date="1999" name="Nature">
        <title>Sequence and analysis of chromosome 4 of the plant Arabidopsis thaliana.</title>
        <authorList>
            <person name="Mayer K.F.X."/>
            <person name="Schueller C."/>
            <person name="Wambutt R."/>
            <person name="Murphy G."/>
            <person name="Volckaert G."/>
            <person name="Pohl T."/>
            <person name="Duesterhoeft A."/>
            <person name="Stiekema W."/>
            <person name="Entian K.-D."/>
            <person name="Terryn N."/>
            <person name="Harris B."/>
            <person name="Ansorge W."/>
            <person name="Brandt P."/>
            <person name="Grivell L.A."/>
            <person name="Rieger M."/>
            <person name="Weichselgartner M."/>
            <person name="de Simone V."/>
            <person name="Obermaier B."/>
            <person name="Mache R."/>
            <person name="Mueller M."/>
            <person name="Kreis M."/>
            <person name="Delseny M."/>
            <person name="Puigdomenech P."/>
            <person name="Watson M."/>
            <person name="Schmidtheini T."/>
            <person name="Reichert B."/>
            <person name="Portetelle D."/>
            <person name="Perez-Alonso M."/>
            <person name="Boutry M."/>
            <person name="Bancroft I."/>
            <person name="Vos P."/>
            <person name="Hoheisel J."/>
            <person name="Zimmermann W."/>
            <person name="Wedler H."/>
            <person name="Ridley P."/>
            <person name="Langham S.-A."/>
            <person name="McCullagh B."/>
            <person name="Bilham L."/>
            <person name="Robben J."/>
            <person name="van der Schueren J."/>
            <person name="Grymonprez B."/>
            <person name="Chuang Y.-J."/>
            <person name="Vandenbussche F."/>
            <person name="Braeken M."/>
            <person name="Weltjens I."/>
            <person name="Voet M."/>
            <person name="Bastiaens I."/>
            <person name="Aert R."/>
            <person name="Defoor E."/>
            <person name="Weitzenegger T."/>
            <person name="Bothe G."/>
            <person name="Ramsperger U."/>
            <person name="Hilbert H."/>
            <person name="Braun M."/>
            <person name="Holzer E."/>
            <person name="Brandt A."/>
            <person name="Peters S."/>
            <person name="van Staveren M."/>
            <person name="Dirkse W."/>
            <person name="Mooijman P."/>
            <person name="Klein Lankhorst R."/>
            <person name="Rose M."/>
            <person name="Hauf J."/>
            <person name="Koetter P."/>
            <person name="Berneiser S."/>
            <person name="Hempel S."/>
            <person name="Feldpausch M."/>
            <person name="Lamberth S."/>
            <person name="Van den Daele H."/>
            <person name="De Keyser A."/>
            <person name="Buysshaert C."/>
            <person name="Gielen J."/>
            <person name="Villarroel R."/>
            <person name="De Clercq R."/>
            <person name="van Montagu M."/>
            <person name="Rogers J."/>
            <person name="Cronin A."/>
            <person name="Quail M.A."/>
            <person name="Bray-Allen S."/>
            <person name="Clark L."/>
            <person name="Doggett J."/>
            <person name="Hall S."/>
            <person name="Kay M."/>
            <person name="Lennard N."/>
            <person name="McLay K."/>
            <person name="Mayes R."/>
            <person name="Pettett A."/>
            <person name="Rajandream M.A."/>
            <person name="Lyne M."/>
            <person name="Benes V."/>
            <person name="Rechmann S."/>
            <person name="Borkova D."/>
            <person name="Bloecker H."/>
            <person name="Scharfe M."/>
            <person name="Grimm M."/>
            <person name="Loehnert T.-H."/>
            <person name="Dose S."/>
            <person name="de Haan M."/>
            <person name="Maarse A.C."/>
            <person name="Schaefer M."/>
            <person name="Mueller-Auer S."/>
            <person name="Gabel C."/>
            <person name="Fuchs M."/>
            <person name="Fartmann B."/>
            <person name="Granderath K."/>
            <person name="Dauner D."/>
            <person name="Herzl A."/>
            <person name="Neumann S."/>
            <person name="Argiriou A."/>
            <person name="Vitale D."/>
            <person name="Liguori R."/>
            <person name="Piravandi E."/>
            <person name="Massenet O."/>
            <person name="Quigley F."/>
            <person name="Clabauld G."/>
            <person name="Muendlein A."/>
            <person name="Felber R."/>
            <person name="Schnabl S."/>
            <person name="Hiller R."/>
            <person name="Schmidt W."/>
            <person name="Lecharny A."/>
            <person name="Aubourg S."/>
            <person name="Chefdor F."/>
            <person name="Cooke R."/>
            <person name="Berger C."/>
            <person name="Monfort A."/>
            <person name="Casacuberta E."/>
            <person name="Gibbons T."/>
            <person name="Weber N."/>
            <person name="Vandenbol M."/>
            <person name="Bargues M."/>
            <person name="Terol J."/>
            <person name="Torres A."/>
            <person name="Perez-Perez A."/>
            <person name="Purnelle B."/>
            <person name="Bent E."/>
            <person name="Johnson S."/>
            <person name="Tacon D."/>
            <person name="Jesse T."/>
            <person name="Heijnen L."/>
            <person name="Schwarz S."/>
            <person name="Scholler P."/>
            <person name="Heber S."/>
            <person name="Francs P."/>
            <person name="Bielke C."/>
            <person name="Frishman D."/>
            <person name="Haase D."/>
            <person name="Lemcke K."/>
            <person name="Mewes H.-W."/>
            <person name="Stocker S."/>
            <person name="Zaccaria P."/>
            <person name="Bevan M."/>
            <person name="Wilson R.K."/>
            <person name="de la Bastide M."/>
            <person name="Habermann K."/>
            <person name="Parnell L."/>
            <person name="Dedhia N."/>
            <person name="Gnoj L."/>
            <person name="Schutz K."/>
            <person name="Huang E."/>
            <person name="Spiegel L."/>
            <person name="Sekhon M."/>
            <person name="Murray J."/>
            <person name="Sheet P."/>
            <person name="Cordes M."/>
            <person name="Abu-Threideh J."/>
            <person name="Stoneking T."/>
            <person name="Kalicki J."/>
            <person name="Graves T."/>
            <person name="Harmon G."/>
            <person name="Edwards J."/>
            <person name="Latreille P."/>
            <person name="Courtney L."/>
            <person name="Cloud J."/>
            <person name="Abbott A."/>
            <person name="Scott K."/>
            <person name="Johnson D."/>
            <person name="Minx P."/>
            <person name="Bentley D."/>
            <person name="Fulton B."/>
            <person name="Miller N."/>
            <person name="Greco T."/>
            <person name="Kemp K."/>
            <person name="Kramer J."/>
            <person name="Fulton L."/>
            <person name="Mardis E."/>
            <person name="Dante M."/>
            <person name="Pepin K."/>
            <person name="Hillier L.W."/>
            <person name="Nelson J."/>
            <person name="Spieth J."/>
            <person name="Ryan E."/>
            <person name="Andrews S."/>
            <person name="Geisel C."/>
            <person name="Layman D."/>
            <person name="Du H."/>
            <person name="Ali J."/>
            <person name="Berghoff A."/>
            <person name="Jones K."/>
            <person name="Drone K."/>
            <person name="Cotton M."/>
            <person name="Joshu C."/>
            <person name="Antonoiu B."/>
            <person name="Zidanic M."/>
            <person name="Strong C."/>
            <person name="Sun H."/>
            <person name="Lamar B."/>
            <person name="Yordan C."/>
            <person name="Ma P."/>
            <person name="Zhong J."/>
            <person name="Preston R."/>
            <person name="Vil D."/>
            <person name="Shekher M."/>
            <person name="Matero A."/>
            <person name="Shah R."/>
            <person name="Swaby I.K."/>
            <person name="O'Shaughnessy A."/>
            <person name="Rodriguez M."/>
            <person name="Hoffman J."/>
            <person name="Till S."/>
            <person name="Granat S."/>
            <person name="Shohdy N."/>
            <person name="Hasegawa A."/>
            <person name="Hameed A."/>
            <person name="Lodhi M."/>
            <person name="Johnson A."/>
            <person name="Chen E."/>
            <person name="Marra M.A."/>
            <person name="Martienssen R."/>
            <person name="McCombie W.R."/>
        </authorList>
    </citation>
    <scope>NUCLEOTIDE SEQUENCE [LARGE SCALE GENOMIC DNA]</scope>
    <source>
        <strain>cv. Columbia</strain>
    </source>
</reference>
<reference key="2">
    <citation type="journal article" date="2017" name="Plant J.">
        <title>Araport11: a complete reannotation of the Arabidopsis thaliana reference genome.</title>
        <authorList>
            <person name="Cheng C.Y."/>
            <person name="Krishnakumar V."/>
            <person name="Chan A.P."/>
            <person name="Thibaud-Nissen F."/>
            <person name="Schobel S."/>
            <person name="Town C.D."/>
        </authorList>
    </citation>
    <scope>GENOME REANNOTATION</scope>
    <source>
        <strain>cv. Columbia</strain>
    </source>
</reference>
<reference key="3">
    <citation type="journal article" date="2002" name="Gene">
        <title>Analysis and expression of the class III peroxidase large gene family in Arabidopsis thaliana.</title>
        <authorList>
            <person name="Tognolli M."/>
            <person name="Penel C."/>
            <person name="Greppin H."/>
            <person name="Simon P."/>
        </authorList>
    </citation>
    <scope>GENE FAMILY ORGANIZATION</scope>
    <scope>NOMENCLATURE</scope>
    <source>
        <strain>cv. Columbia</strain>
    </source>
</reference>
<dbReference type="EC" id="1.11.1.7"/>
<dbReference type="EMBL" id="AL049483">
    <property type="protein sequence ID" value="CAB39663.1"/>
    <property type="status" value="ALT_INIT"/>
    <property type="molecule type" value="Genomic_DNA"/>
</dbReference>
<dbReference type="EMBL" id="AL161564">
    <property type="protein sequence ID" value="CAB79453.1"/>
    <property type="status" value="ALT_INIT"/>
    <property type="molecule type" value="Genomic_DNA"/>
</dbReference>
<dbReference type="EMBL" id="CP002687">
    <property type="protein sequence ID" value="AEE85139.2"/>
    <property type="molecule type" value="Genomic_DNA"/>
</dbReference>
<dbReference type="RefSeq" id="NP_194328.2">
    <property type="nucleotide sequence ID" value="NM_118731.2"/>
</dbReference>
<dbReference type="SMR" id="Q9SZH2"/>
<dbReference type="FunCoup" id="Q9SZH2">
    <property type="interactions" value="138"/>
</dbReference>
<dbReference type="STRING" id="3702.Q9SZH2"/>
<dbReference type="PeroxiBase" id="209">
    <property type="entry name" value="AtPrx43"/>
</dbReference>
<dbReference type="GlyCosmos" id="Q9SZH2">
    <property type="glycosylation" value="1 site, No reported glycans"/>
</dbReference>
<dbReference type="GlyGen" id="Q9SZH2">
    <property type="glycosylation" value="1 site"/>
</dbReference>
<dbReference type="PaxDb" id="3702-AT4G25980.1"/>
<dbReference type="ProteomicsDB" id="236421"/>
<dbReference type="EnsemblPlants" id="AT4G25980.1">
    <property type="protein sequence ID" value="AT4G25980.1"/>
    <property type="gene ID" value="AT4G25980"/>
</dbReference>
<dbReference type="GeneID" id="828704"/>
<dbReference type="Gramene" id="AT4G25980.1">
    <property type="protein sequence ID" value="AT4G25980.1"/>
    <property type="gene ID" value="AT4G25980"/>
</dbReference>
<dbReference type="KEGG" id="ath:AT4G25980"/>
<dbReference type="Araport" id="AT4G25980"/>
<dbReference type="TAIR" id="AT4G25980"/>
<dbReference type="eggNOG" id="ENOG502QQ2G">
    <property type="taxonomic scope" value="Eukaryota"/>
</dbReference>
<dbReference type="HOGENOM" id="CLU_010543_0_3_1"/>
<dbReference type="InParanoid" id="Q9SZH2"/>
<dbReference type="OMA" id="SIVRMGQ"/>
<dbReference type="OrthoDB" id="2113341at2759"/>
<dbReference type="PhylomeDB" id="Q9SZH2"/>
<dbReference type="BioCyc" id="ARA:AT4G25980-MONOMER"/>
<dbReference type="PRO" id="PR:Q9SZH2"/>
<dbReference type="Proteomes" id="UP000006548">
    <property type="component" value="Chromosome 4"/>
</dbReference>
<dbReference type="ExpressionAtlas" id="Q9SZH2">
    <property type="expression patterns" value="baseline and differential"/>
</dbReference>
<dbReference type="GO" id="GO:0005576">
    <property type="term" value="C:extracellular region"/>
    <property type="evidence" value="ECO:0007669"/>
    <property type="project" value="UniProtKB-SubCell"/>
</dbReference>
<dbReference type="GO" id="GO:0020037">
    <property type="term" value="F:heme binding"/>
    <property type="evidence" value="ECO:0007669"/>
    <property type="project" value="InterPro"/>
</dbReference>
<dbReference type="GO" id="GO:0140825">
    <property type="term" value="F:lactoperoxidase activity"/>
    <property type="evidence" value="ECO:0007669"/>
    <property type="project" value="UniProtKB-EC"/>
</dbReference>
<dbReference type="GO" id="GO:0046872">
    <property type="term" value="F:metal ion binding"/>
    <property type="evidence" value="ECO:0007669"/>
    <property type="project" value="UniProtKB-KW"/>
</dbReference>
<dbReference type="GO" id="GO:0042744">
    <property type="term" value="P:hydrogen peroxide catabolic process"/>
    <property type="evidence" value="ECO:0007669"/>
    <property type="project" value="UniProtKB-KW"/>
</dbReference>
<dbReference type="GO" id="GO:0006979">
    <property type="term" value="P:response to oxidative stress"/>
    <property type="evidence" value="ECO:0007669"/>
    <property type="project" value="InterPro"/>
</dbReference>
<dbReference type="CDD" id="cd00693">
    <property type="entry name" value="secretory_peroxidase"/>
    <property type="match status" value="1"/>
</dbReference>
<dbReference type="FunFam" id="1.10.420.10:FF:000010">
    <property type="entry name" value="Peroxidase"/>
    <property type="match status" value="1"/>
</dbReference>
<dbReference type="FunFam" id="1.10.520.10:FF:000008">
    <property type="entry name" value="Peroxidase"/>
    <property type="match status" value="1"/>
</dbReference>
<dbReference type="Gene3D" id="1.10.520.10">
    <property type="match status" value="1"/>
</dbReference>
<dbReference type="Gene3D" id="1.10.420.10">
    <property type="entry name" value="Peroxidase, domain 2"/>
    <property type="match status" value="1"/>
</dbReference>
<dbReference type="InterPro" id="IPR002016">
    <property type="entry name" value="Haem_peroxidase"/>
</dbReference>
<dbReference type="InterPro" id="IPR010255">
    <property type="entry name" value="Haem_peroxidase_sf"/>
</dbReference>
<dbReference type="InterPro" id="IPR000823">
    <property type="entry name" value="Peroxidase_pln"/>
</dbReference>
<dbReference type="InterPro" id="IPR019793">
    <property type="entry name" value="Peroxidases_heam-ligand_BS"/>
</dbReference>
<dbReference type="InterPro" id="IPR033905">
    <property type="entry name" value="Secretory_peroxidase"/>
</dbReference>
<dbReference type="PANTHER" id="PTHR31235">
    <property type="entry name" value="PEROXIDASE 25-RELATED"/>
    <property type="match status" value="1"/>
</dbReference>
<dbReference type="Pfam" id="PF00141">
    <property type="entry name" value="peroxidase"/>
    <property type="match status" value="1"/>
</dbReference>
<dbReference type="PRINTS" id="PR00458">
    <property type="entry name" value="PEROXIDASE"/>
</dbReference>
<dbReference type="PRINTS" id="PR00461">
    <property type="entry name" value="PLPEROXIDASE"/>
</dbReference>
<dbReference type="SUPFAM" id="SSF48113">
    <property type="entry name" value="Heme-dependent peroxidases"/>
    <property type="match status" value="1"/>
</dbReference>
<dbReference type="PROSITE" id="PS00435">
    <property type="entry name" value="PEROXIDASE_1"/>
    <property type="match status" value="1"/>
</dbReference>
<dbReference type="PROSITE" id="PS50873">
    <property type="entry name" value="PEROXIDASE_4"/>
    <property type="match status" value="1"/>
</dbReference>
<feature type="signal peptide" evidence="1">
    <location>
        <begin position="1"/>
        <end position="24"/>
    </location>
</feature>
<feature type="chain" id="PRO_0000023709" description="Peroxidase 43">
    <location>
        <begin position="25"/>
        <end position="326"/>
    </location>
</feature>
<feature type="active site" description="Proton acceptor" evidence="2">
    <location>
        <position position="66"/>
    </location>
</feature>
<feature type="binding site" evidence="2">
    <location>
        <position position="67"/>
    </location>
    <ligand>
        <name>Ca(2+)</name>
        <dbReference type="ChEBI" id="CHEBI:29108"/>
        <label>1</label>
    </ligand>
</feature>
<feature type="binding site" evidence="2">
    <location>
        <position position="70"/>
    </location>
    <ligand>
        <name>Ca(2+)</name>
        <dbReference type="ChEBI" id="CHEBI:29108"/>
        <label>1</label>
    </ligand>
</feature>
<feature type="binding site" evidence="2">
    <location>
        <position position="72"/>
    </location>
    <ligand>
        <name>Ca(2+)</name>
        <dbReference type="ChEBI" id="CHEBI:29108"/>
        <label>1</label>
    </ligand>
</feature>
<feature type="binding site" evidence="2">
    <location>
        <position position="74"/>
    </location>
    <ligand>
        <name>Ca(2+)</name>
        <dbReference type="ChEBI" id="CHEBI:29108"/>
        <label>1</label>
    </ligand>
</feature>
<feature type="binding site" evidence="2">
    <location>
        <position position="76"/>
    </location>
    <ligand>
        <name>Ca(2+)</name>
        <dbReference type="ChEBI" id="CHEBI:29108"/>
        <label>1</label>
    </ligand>
</feature>
<feature type="binding site" evidence="2">
    <location>
        <position position="159"/>
    </location>
    <ligand>
        <name>substrate</name>
    </ligand>
</feature>
<feature type="binding site" description="axial binding residue" evidence="2">
    <location>
        <position position="189"/>
    </location>
    <ligand>
        <name>heme b</name>
        <dbReference type="ChEBI" id="CHEBI:60344"/>
    </ligand>
    <ligandPart>
        <name>Fe</name>
        <dbReference type="ChEBI" id="CHEBI:18248"/>
    </ligandPart>
</feature>
<feature type="binding site" evidence="2">
    <location>
        <position position="190"/>
    </location>
    <ligand>
        <name>Ca(2+)</name>
        <dbReference type="ChEBI" id="CHEBI:29108"/>
        <label>2</label>
    </ligand>
</feature>
<feature type="binding site" evidence="2">
    <location>
        <position position="241"/>
    </location>
    <ligand>
        <name>Ca(2+)</name>
        <dbReference type="ChEBI" id="CHEBI:29108"/>
        <label>2</label>
    </ligand>
</feature>
<feature type="binding site" evidence="2">
    <location>
        <position position="244"/>
    </location>
    <ligand>
        <name>Ca(2+)</name>
        <dbReference type="ChEBI" id="CHEBI:29108"/>
        <label>2</label>
    </ligand>
</feature>
<feature type="binding site" evidence="2">
    <location>
        <position position="249"/>
    </location>
    <ligand>
        <name>Ca(2+)</name>
        <dbReference type="ChEBI" id="CHEBI:29108"/>
        <label>2</label>
    </ligand>
</feature>
<feature type="site" description="Transition state stabilizer" evidence="2">
    <location>
        <position position="62"/>
    </location>
</feature>
<feature type="glycosylation site" description="N-linked (GlcNAc...) asparagine" evidence="1">
    <location>
        <position position="151"/>
    </location>
</feature>
<feature type="disulfide bond" evidence="2">
    <location>
        <begin position="35"/>
        <end position="112"/>
    </location>
</feature>
<feature type="disulfide bond" evidence="2">
    <location>
        <begin position="68"/>
        <end position="73"/>
    </location>
</feature>
<feature type="disulfide bond" evidence="2">
    <location>
        <begin position="118"/>
        <end position="322"/>
    </location>
</feature>
<feature type="disulfide bond" evidence="2">
    <location>
        <begin position="196"/>
        <end position="228"/>
    </location>
</feature>
<protein>
    <recommendedName>
        <fullName>Peroxidase 43</fullName>
        <shortName>Atperox P43</shortName>
        <ecNumber>1.11.1.7</ecNumber>
    </recommendedName>
</protein>
<proteinExistence type="inferred from homology"/>
<name>PER43_ARATH</name>
<organism>
    <name type="scientific">Arabidopsis thaliana</name>
    <name type="common">Mouse-ear cress</name>
    <dbReference type="NCBI Taxonomy" id="3702"/>
    <lineage>
        <taxon>Eukaryota</taxon>
        <taxon>Viridiplantae</taxon>
        <taxon>Streptophyta</taxon>
        <taxon>Embryophyta</taxon>
        <taxon>Tracheophyta</taxon>
        <taxon>Spermatophyta</taxon>
        <taxon>Magnoliopsida</taxon>
        <taxon>eudicotyledons</taxon>
        <taxon>Gunneridae</taxon>
        <taxon>Pentapetalae</taxon>
        <taxon>rosids</taxon>
        <taxon>malvids</taxon>
        <taxon>Brassicales</taxon>
        <taxon>Brassicaceae</taxon>
        <taxon>Camelineae</taxon>
        <taxon>Arabidopsis</taxon>
    </lineage>
</organism>
<evidence type="ECO:0000255" key="1"/>
<evidence type="ECO:0000255" key="2">
    <source>
        <dbReference type="PROSITE-ProRule" id="PRU00297"/>
    </source>
</evidence>
<evidence type="ECO:0000305" key="3"/>